<comment type="function">
    <text evidence="1">Phosphorolytic 3'-5' exoribonuclease that plays an important role in tRNA 3'-end maturation. Removes nucleotide residues following the 3'-CCA terminus of tRNAs; can also add nucleotides to the ends of RNA molecules by using nucleoside diphosphates as substrates, but this may not be physiologically important. Probably plays a role in initiation of 16S rRNA degradation (leading to ribosome degradation) during starvation.</text>
</comment>
<comment type="catalytic activity">
    <reaction evidence="1">
        <text>tRNA(n+1) + phosphate = tRNA(n) + a ribonucleoside 5'-diphosphate</text>
        <dbReference type="Rhea" id="RHEA:10628"/>
        <dbReference type="Rhea" id="RHEA-COMP:17343"/>
        <dbReference type="Rhea" id="RHEA-COMP:17344"/>
        <dbReference type="ChEBI" id="CHEBI:43474"/>
        <dbReference type="ChEBI" id="CHEBI:57930"/>
        <dbReference type="ChEBI" id="CHEBI:173114"/>
        <dbReference type="EC" id="2.7.7.56"/>
    </reaction>
</comment>
<comment type="subunit">
    <text evidence="1">Homohexameric ring arranged as a trimer of dimers.</text>
</comment>
<comment type="similarity">
    <text evidence="1">Belongs to the RNase PH family.</text>
</comment>
<protein>
    <recommendedName>
        <fullName evidence="1">Ribonuclease PH</fullName>
        <shortName evidence="1">RNase PH</shortName>
        <ecNumber evidence="1">2.7.7.56</ecNumber>
    </recommendedName>
    <alternativeName>
        <fullName evidence="1">tRNA nucleotidyltransferase</fullName>
    </alternativeName>
</protein>
<sequence>MRPSGRKLDQMRSVSIEPNVMKHAEGSCLIRMGETHVLCSASIEDKPPPFLKNTGLGWVTAEYGMLPRATTSRNRREAAAGKQSGRTQEIQRLIGRALRAGVDRSALGERQIVIDCDVLQADGGTRCASITGGWVALRLAVNKLLKAGIIVSDPIVDHVAAVSCGIYAGQPVLDLDYAEDSTAGTDGNFVLTGRSRMIEVQMSAEGASFSRDEMGQLLDLAEAGIAELVAAQKAALG</sequence>
<organism>
    <name type="scientific">Cereibacter sphaeroides (strain ATCC 17029 / ATH 2.4.9)</name>
    <name type="common">Rhodobacter sphaeroides</name>
    <dbReference type="NCBI Taxonomy" id="349101"/>
    <lineage>
        <taxon>Bacteria</taxon>
        <taxon>Pseudomonadati</taxon>
        <taxon>Pseudomonadota</taxon>
        <taxon>Alphaproteobacteria</taxon>
        <taxon>Rhodobacterales</taxon>
        <taxon>Paracoccaceae</taxon>
        <taxon>Cereibacter</taxon>
    </lineage>
</organism>
<accession>A3PNR8</accession>
<proteinExistence type="inferred from homology"/>
<gene>
    <name evidence="1" type="primary">rph</name>
    <name type="ordered locus">Rsph17029_2882</name>
</gene>
<keyword id="KW-0548">Nucleotidyltransferase</keyword>
<keyword id="KW-0694">RNA-binding</keyword>
<keyword id="KW-0698">rRNA processing</keyword>
<keyword id="KW-0808">Transferase</keyword>
<keyword id="KW-0819">tRNA processing</keyword>
<keyword id="KW-0820">tRNA-binding</keyword>
<feature type="chain" id="PRO_1000024867" description="Ribonuclease PH">
    <location>
        <begin position="1"/>
        <end position="237"/>
    </location>
</feature>
<feature type="binding site" evidence="1">
    <location>
        <position position="86"/>
    </location>
    <ligand>
        <name>phosphate</name>
        <dbReference type="ChEBI" id="CHEBI:43474"/>
        <note>substrate</note>
    </ligand>
</feature>
<feature type="binding site" evidence="1">
    <location>
        <begin position="124"/>
        <end position="126"/>
    </location>
    <ligand>
        <name>phosphate</name>
        <dbReference type="ChEBI" id="CHEBI:43474"/>
        <note>substrate</note>
    </ligand>
</feature>
<reference key="1">
    <citation type="submission" date="2007-02" db="EMBL/GenBank/DDBJ databases">
        <title>Complete sequence of chromosome 1 of Rhodobacter sphaeroides ATCC 17029.</title>
        <authorList>
            <person name="Copeland A."/>
            <person name="Lucas S."/>
            <person name="Lapidus A."/>
            <person name="Barry K."/>
            <person name="Detter J.C."/>
            <person name="Glavina del Rio T."/>
            <person name="Hammon N."/>
            <person name="Israni S."/>
            <person name="Dalin E."/>
            <person name="Tice H."/>
            <person name="Pitluck S."/>
            <person name="Kiss H."/>
            <person name="Brettin T."/>
            <person name="Bruce D."/>
            <person name="Han C."/>
            <person name="Tapia R."/>
            <person name="Gilna P."/>
            <person name="Schmutz J."/>
            <person name="Larimer F."/>
            <person name="Land M."/>
            <person name="Hauser L."/>
            <person name="Kyrpides N."/>
            <person name="Mikhailova N."/>
            <person name="Richardson P."/>
            <person name="Mackenzie C."/>
            <person name="Choudhary M."/>
            <person name="Donohue T.J."/>
            <person name="Kaplan S."/>
        </authorList>
    </citation>
    <scope>NUCLEOTIDE SEQUENCE [LARGE SCALE GENOMIC DNA]</scope>
    <source>
        <strain>ATCC 17029 / ATH 2.4.9</strain>
    </source>
</reference>
<evidence type="ECO:0000255" key="1">
    <source>
        <dbReference type="HAMAP-Rule" id="MF_00564"/>
    </source>
</evidence>
<name>RNPH_CERS1</name>
<dbReference type="EC" id="2.7.7.56" evidence="1"/>
<dbReference type="EMBL" id="CP000577">
    <property type="protein sequence ID" value="ABN77984.1"/>
    <property type="molecule type" value="Genomic_DNA"/>
</dbReference>
<dbReference type="RefSeq" id="WP_011841941.1">
    <property type="nucleotide sequence ID" value="NC_009049.1"/>
</dbReference>
<dbReference type="SMR" id="A3PNR8"/>
<dbReference type="GeneID" id="3719669"/>
<dbReference type="KEGG" id="rsh:Rsph17029_2882"/>
<dbReference type="HOGENOM" id="CLU_050858_0_0_5"/>
<dbReference type="GO" id="GO:0000175">
    <property type="term" value="F:3'-5'-RNA exonuclease activity"/>
    <property type="evidence" value="ECO:0007669"/>
    <property type="project" value="UniProtKB-UniRule"/>
</dbReference>
<dbReference type="GO" id="GO:0000049">
    <property type="term" value="F:tRNA binding"/>
    <property type="evidence" value="ECO:0007669"/>
    <property type="project" value="UniProtKB-UniRule"/>
</dbReference>
<dbReference type="GO" id="GO:0009022">
    <property type="term" value="F:tRNA nucleotidyltransferase activity"/>
    <property type="evidence" value="ECO:0007669"/>
    <property type="project" value="UniProtKB-UniRule"/>
</dbReference>
<dbReference type="GO" id="GO:0016075">
    <property type="term" value="P:rRNA catabolic process"/>
    <property type="evidence" value="ECO:0007669"/>
    <property type="project" value="UniProtKB-UniRule"/>
</dbReference>
<dbReference type="GO" id="GO:0006364">
    <property type="term" value="P:rRNA processing"/>
    <property type="evidence" value="ECO:0007669"/>
    <property type="project" value="UniProtKB-KW"/>
</dbReference>
<dbReference type="GO" id="GO:0008033">
    <property type="term" value="P:tRNA processing"/>
    <property type="evidence" value="ECO:0007669"/>
    <property type="project" value="UniProtKB-UniRule"/>
</dbReference>
<dbReference type="CDD" id="cd11362">
    <property type="entry name" value="RNase_PH_bact"/>
    <property type="match status" value="1"/>
</dbReference>
<dbReference type="FunFam" id="3.30.230.70:FF:000003">
    <property type="entry name" value="Ribonuclease PH"/>
    <property type="match status" value="1"/>
</dbReference>
<dbReference type="Gene3D" id="3.30.230.70">
    <property type="entry name" value="GHMP Kinase, N-terminal domain"/>
    <property type="match status" value="1"/>
</dbReference>
<dbReference type="HAMAP" id="MF_00564">
    <property type="entry name" value="RNase_PH"/>
    <property type="match status" value="1"/>
</dbReference>
<dbReference type="InterPro" id="IPR001247">
    <property type="entry name" value="ExoRNase_PH_dom1"/>
</dbReference>
<dbReference type="InterPro" id="IPR015847">
    <property type="entry name" value="ExoRNase_PH_dom2"/>
</dbReference>
<dbReference type="InterPro" id="IPR036345">
    <property type="entry name" value="ExoRNase_PH_dom2_sf"/>
</dbReference>
<dbReference type="InterPro" id="IPR027408">
    <property type="entry name" value="PNPase/RNase_PH_dom_sf"/>
</dbReference>
<dbReference type="InterPro" id="IPR020568">
    <property type="entry name" value="Ribosomal_Su5_D2-typ_SF"/>
</dbReference>
<dbReference type="InterPro" id="IPR050080">
    <property type="entry name" value="RNase_PH"/>
</dbReference>
<dbReference type="InterPro" id="IPR002381">
    <property type="entry name" value="RNase_PH_bac-type"/>
</dbReference>
<dbReference type="InterPro" id="IPR018336">
    <property type="entry name" value="RNase_PH_CS"/>
</dbReference>
<dbReference type="NCBIfam" id="TIGR01966">
    <property type="entry name" value="RNasePH"/>
    <property type="match status" value="1"/>
</dbReference>
<dbReference type="PANTHER" id="PTHR11953">
    <property type="entry name" value="EXOSOME COMPLEX COMPONENT"/>
    <property type="match status" value="1"/>
</dbReference>
<dbReference type="PANTHER" id="PTHR11953:SF0">
    <property type="entry name" value="EXOSOME COMPLEX COMPONENT RRP41"/>
    <property type="match status" value="1"/>
</dbReference>
<dbReference type="Pfam" id="PF01138">
    <property type="entry name" value="RNase_PH"/>
    <property type="match status" value="1"/>
</dbReference>
<dbReference type="Pfam" id="PF03725">
    <property type="entry name" value="RNase_PH_C"/>
    <property type="match status" value="1"/>
</dbReference>
<dbReference type="SUPFAM" id="SSF55666">
    <property type="entry name" value="Ribonuclease PH domain 2-like"/>
    <property type="match status" value="1"/>
</dbReference>
<dbReference type="SUPFAM" id="SSF54211">
    <property type="entry name" value="Ribosomal protein S5 domain 2-like"/>
    <property type="match status" value="1"/>
</dbReference>
<dbReference type="PROSITE" id="PS01277">
    <property type="entry name" value="RIBONUCLEASE_PH"/>
    <property type="match status" value="1"/>
</dbReference>